<feature type="chain" id="PRO_0000131968" description="Cytidylate kinase">
    <location>
        <begin position="1"/>
        <end position="227"/>
    </location>
</feature>
<feature type="binding site" evidence="1">
    <location>
        <begin position="12"/>
        <end position="20"/>
    </location>
    <ligand>
        <name>ATP</name>
        <dbReference type="ChEBI" id="CHEBI:30616"/>
    </ligand>
</feature>
<accession>Q8Z803</accession>
<evidence type="ECO:0000255" key="1">
    <source>
        <dbReference type="HAMAP-Rule" id="MF_00238"/>
    </source>
</evidence>
<proteinExistence type="inferred from homology"/>
<organism>
    <name type="scientific">Salmonella typhi</name>
    <dbReference type="NCBI Taxonomy" id="90370"/>
    <lineage>
        <taxon>Bacteria</taxon>
        <taxon>Pseudomonadati</taxon>
        <taxon>Pseudomonadota</taxon>
        <taxon>Gammaproteobacteria</taxon>
        <taxon>Enterobacterales</taxon>
        <taxon>Enterobacteriaceae</taxon>
        <taxon>Salmonella</taxon>
    </lineage>
</organism>
<gene>
    <name evidence="1" type="primary">cmk</name>
    <name type="ordered locus">STY0980</name>
    <name type="ordered locus">t1954</name>
</gene>
<keyword id="KW-0067">ATP-binding</keyword>
<keyword id="KW-0963">Cytoplasm</keyword>
<keyword id="KW-0418">Kinase</keyword>
<keyword id="KW-0547">Nucleotide-binding</keyword>
<keyword id="KW-0808">Transferase</keyword>
<reference key="1">
    <citation type="journal article" date="2001" name="Nature">
        <title>Complete genome sequence of a multiple drug resistant Salmonella enterica serovar Typhi CT18.</title>
        <authorList>
            <person name="Parkhill J."/>
            <person name="Dougan G."/>
            <person name="James K.D."/>
            <person name="Thomson N.R."/>
            <person name="Pickard D."/>
            <person name="Wain J."/>
            <person name="Churcher C.M."/>
            <person name="Mungall K.L."/>
            <person name="Bentley S.D."/>
            <person name="Holden M.T.G."/>
            <person name="Sebaihia M."/>
            <person name="Baker S."/>
            <person name="Basham D."/>
            <person name="Brooks K."/>
            <person name="Chillingworth T."/>
            <person name="Connerton P."/>
            <person name="Cronin A."/>
            <person name="Davis P."/>
            <person name="Davies R.M."/>
            <person name="Dowd L."/>
            <person name="White N."/>
            <person name="Farrar J."/>
            <person name="Feltwell T."/>
            <person name="Hamlin N."/>
            <person name="Haque A."/>
            <person name="Hien T.T."/>
            <person name="Holroyd S."/>
            <person name="Jagels K."/>
            <person name="Krogh A."/>
            <person name="Larsen T.S."/>
            <person name="Leather S."/>
            <person name="Moule S."/>
            <person name="O'Gaora P."/>
            <person name="Parry C."/>
            <person name="Quail M.A."/>
            <person name="Rutherford K.M."/>
            <person name="Simmonds M."/>
            <person name="Skelton J."/>
            <person name="Stevens K."/>
            <person name="Whitehead S."/>
            <person name="Barrell B.G."/>
        </authorList>
    </citation>
    <scope>NUCLEOTIDE SEQUENCE [LARGE SCALE GENOMIC DNA]</scope>
    <source>
        <strain>CT18</strain>
    </source>
</reference>
<reference key="2">
    <citation type="journal article" date="2003" name="J. Bacteriol.">
        <title>Comparative genomics of Salmonella enterica serovar Typhi strains Ty2 and CT18.</title>
        <authorList>
            <person name="Deng W."/>
            <person name="Liou S.-R."/>
            <person name="Plunkett G. III"/>
            <person name="Mayhew G.F."/>
            <person name="Rose D.J."/>
            <person name="Burland V."/>
            <person name="Kodoyianni V."/>
            <person name="Schwartz D.C."/>
            <person name="Blattner F.R."/>
        </authorList>
    </citation>
    <scope>NUCLEOTIDE SEQUENCE [LARGE SCALE GENOMIC DNA]</scope>
    <source>
        <strain>ATCC 700931 / Ty2</strain>
    </source>
</reference>
<protein>
    <recommendedName>
        <fullName evidence="1">Cytidylate kinase</fullName>
        <shortName evidence="1">CK</shortName>
        <ecNumber evidence="1">2.7.4.25</ecNumber>
    </recommendedName>
    <alternativeName>
        <fullName evidence="1">Cytidine monophosphate kinase</fullName>
        <shortName evidence="1">CMP kinase</shortName>
    </alternativeName>
</protein>
<name>KCY_SALTI</name>
<sequence>MTAIAPVITIDGPSGAGKGTLCKAMAEALQWHLLDSGAIYRVLALAALHHHVDLASEDALVPLASHLDVRFVSTDGNLEVILEGEDVSGEIRTQEVANAASQVAAFPRVREALLRRQRAFREAPGLIADGRDMGTVVFPDAPVKIFLDASSEERAHRRMLQLQENGFSVNFERLLAEIKERDDRDRNRAVAPLVPAADALVLDSTRLSIEQVIEKALQYARQKLALA</sequence>
<dbReference type="EC" id="2.7.4.25" evidence="1"/>
<dbReference type="EMBL" id="AL513382">
    <property type="protein sequence ID" value="CAD05380.1"/>
    <property type="molecule type" value="Genomic_DNA"/>
</dbReference>
<dbReference type="EMBL" id="AE014613">
    <property type="protein sequence ID" value="AAO69568.1"/>
    <property type="molecule type" value="Genomic_DNA"/>
</dbReference>
<dbReference type="RefSeq" id="NP_455467.1">
    <property type="nucleotide sequence ID" value="NC_003198.1"/>
</dbReference>
<dbReference type="RefSeq" id="WP_000125007.1">
    <property type="nucleotide sequence ID" value="NZ_WSUR01000013.1"/>
</dbReference>
<dbReference type="SMR" id="Q8Z803"/>
<dbReference type="STRING" id="220341.gene:17584971"/>
<dbReference type="KEGG" id="stt:t1954"/>
<dbReference type="KEGG" id="sty:STY0980"/>
<dbReference type="PATRIC" id="fig|220341.7.peg.989"/>
<dbReference type="eggNOG" id="COG0283">
    <property type="taxonomic scope" value="Bacteria"/>
</dbReference>
<dbReference type="HOGENOM" id="CLU_079959_0_2_6"/>
<dbReference type="OMA" id="RAITWWM"/>
<dbReference type="OrthoDB" id="9807434at2"/>
<dbReference type="Proteomes" id="UP000000541">
    <property type="component" value="Chromosome"/>
</dbReference>
<dbReference type="Proteomes" id="UP000002670">
    <property type="component" value="Chromosome"/>
</dbReference>
<dbReference type="GO" id="GO:0005829">
    <property type="term" value="C:cytosol"/>
    <property type="evidence" value="ECO:0007669"/>
    <property type="project" value="TreeGrafter"/>
</dbReference>
<dbReference type="GO" id="GO:0005524">
    <property type="term" value="F:ATP binding"/>
    <property type="evidence" value="ECO:0007669"/>
    <property type="project" value="UniProtKB-UniRule"/>
</dbReference>
<dbReference type="GO" id="GO:0036430">
    <property type="term" value="F:CMP kinase activity"/>
    <property type="evidence" value="ECO:0007669"/>
    <property type="project" value="RHEA"/>
</dbReference>
<dbReference type="GO" id="GO:0036431">
    <property type="term" value="F:dCMP kinase activity"/>
    <property type="evidence" value="ECO:0007669"/>
    <property type="project" value="RHEA"/>
</dbReference>
<dbReference type="GO" id="GO:0015949">
    <property type="term" value="P:nucleobase-containing small molecule interconversion"/>
    <property type="evidence" value="ECO:0007669"/>
    <property type="project" value="TreeGrafter"/>
</dbReference>
<dbReference type="GO" id="GO:0006220">
    <property type="term" value="P:pyrimidine nucleotide metabolic process"/>
    <property type="evidence" value="ECO:0007669"/>
    <property type="project" value="UniProtKB-UniRule"/>
</dbReference>
<dbReference type="CDD" id="cd02020">
    <property type="entry name" value="CMPK"/>
    <property type="match status" value="1"/>
</dbReference>
<dbReference type="FunFam" id="3.40.50.300:FF:000262">
    <property type="entry name" value="Cytidylate kinase"/>
    <property type="match status" value="1"/>
</dbReference>
<dbReference type="Gene3D" id="3.40.50.300">
    <property type="entry name" value="P-loop containing nucleotide triphosphate hydrolases"/>
    <property type="match status" value="1"/>
</dbReference>
<dbReference type="HAMAP" id="MF_00238">
    <property type="entry name" value="Cytidyl_kinase_type1"/>
    <property type="match status" value="1"/>
</dbReference>
<dbReference type="InterPro" id="IPR003136">
    <property type="entry name" value="Cytidylate_kin"/>
</dbReference>
<dbReference type="InterPro" id="IPR011994">
    <property type="entry name" value="Cytidylate_kinase_dom"/>
</dbReference>
<dbReference type="InterPro" id="IPR027417">
    <property type="entry name" value="P-loop_NTPase"/>
</dbReference>
<dbReference type="NCBIfam" id="TIGR00017">
    <property type="entry name" value="cmk"/>
    <property type="match status" value="1"/>
</dbReference>
<dbReference type="PANTHER" id="PTHR21299:SF2">
    <property type="entry name" value="CYTIDYLATE KINASE"/>
    <property type="match status" value="1"/>
</dbReference>
<dbReference type="PANTHER" id="PTHR21299">
    <property type="entry name" value="CYTIDYLATE KINASE/PANTOATE-BETA-ALANINE LIGASE"/>
    <property type="match status" value="1"/>
</dbReference>
<dbReference type="Pfam" id="PF02224">
    <property type="entry name" value="Cytidylate_kin"/>
    <property type="match status" value="1"/>
</dbReference>
<dbReference type="SUPFAM" id="SSF52540">
    <property type="entry name" value="P-loop containing nucleoside triphosphate hydrolases"/>
    <property type="match status" value="1"/>
</dbReference>
<comment type="catalytic activity">
    <reaction evidence="1">
        <text>CMP + ATP = CDP + ADP</text>
        <dbReference type="Rhea" id="RHEA:11600"/>
        <dbReference type="ChEBI" id="CHEBI:30616"/>
        <dbReference type="ChEBI" id="CHEBI:58069"/>
        <dbReference type="ChEBI" id="CHEBI:60377"/>
        <dbReference type="ChEBI" id="CHEBI:456216"/>
        <dbReference type="EC" id="2.7.4.25"/>
    </reaction>
</comment>
<comment type="catalytic activity">
    <reaction evidence="1">
        <text>dCMP + ATP = dCDP + ADP</text>
        <dbReference type="Rhea" id="RHEA:25094"/>
        <dbReference type="ChEBI" id="CHEBI:30616"/>
        <dbReference type="ChEBI" id="CHEBI:57566"/>
        <dbReference type="ChEBI" id="CHEBI:58593"/>
        <dbReference type="ChEBI" id="CHEBI:456216"/>
        <dbReference type="EC" id="2.7.4.25"/>
    </reaction>
</comment>
<comment type="subcellular location">
    <subcellularLocation>
        <location evidence="1">Cytoplasm</location>
    </subcellularLocation>
</comment>
<comment type="similarity">
    <text evidence="1">Belongs to the cytidylate kinase family. Type 1 subfamily.</text>
</comment>